<organism>
    <name type="scientific">Shigella boydii serotype 4 (strain Sb227)</name>
    <dbReference type="NCBI Taxonomy" id="300268"/>
    <lineage>
        <taxon>Bacteria</taxon>
        <taxon>Pseudomonadati</taxon>
        <taxon>Pseudomonadota</taxon>
        <taxon>Gammaproteobacteria</taxon>
        <taxon>Enterobacterales</taxon>
        <taxon>Enterobacteriaceae</taxon>
        <taxon>Shigella</taxon>
    </lineage>
</organism>
<proteinExistence type="inferred from homology"/>
<keyword id="KW-0687">Ribonucleoprotein</keyword>
<keyword id="KW-0689">Ribosomal protein</keyword>
<keyword id="KW-0694">RNA-binding</keyword>
<keyword id="KW-0699">rRNA-binding</keyword>
<protein>
    <recommendedName>
        <fullName evidence="1">Large ribosomal subunit protein bL21</fullName>
    </recommendedName>
    <alternativeName>
        <fullName evidence="2">50S ribosomal protein L21</fullName>
    </alternativeName>
</protein>
<dbReference type="EMBL" id="CP000036">
    <property type="protein sequence ID" value="ABB67695.1"/>
    <property type="molecule type" value="Genomic_DNA"/>
</dbReference>
<dbReference type="RefSeq" id="WP_000271401.1">
    <property type="nucleotide sequence ID" value="NC_007613.1"/>
</dbReference>
<dbReference type="SMR" id="Q31W63"/>
<dbReference type="GeneID" id="93778795"/>
<dbReference type="KEGG" id="sbo:SBO_3196"/>
<dbReference type="HOGENOM" id="CLU_061463_3_3_6"/>
<dbReference type="Proteomes" id="UP000007067">
    <property type="component" value="Chromosome"/>
</dbReference>
<dbReference type="GO" id="GO:0005737">
    <property type="term" value="C:cytoplasm"/>
    <property type="evidence" value="ECO:0007669"/>
    <property type="project" value="UniProtKB-ARBA"/>
</dbReference>
<dbReference type="GO" id="GO:1990904">
    <property type="term" value="C:ribonucleoprotein complex"/>
    <property type="evidence" value="ECO:0007669"/>
    <property type="project" value="UniProtKB-KW"/>
</dbReference>
<dbReference type="GO" id="GO:0005840">
    <property type="term" value="C:ribosome"/>
    <property type="evidence" value="ECO:0007669"/>
    <property type="project" value="UniProtKB-KW"/>
</dbReference>
<dbReference type="GO" id="GO:0019843">
    <property type="term" value="F:rRNA binding"/>
    <property type="evidence" value="ECO:0007669"/>
    <property type="project" value="UniProtKB-UniRule"/>
</dbReference>
<dbReference type="GO" id="GO:0003735">
    <property type="term" value="F:structural constituent of ribosome"/>
    <property type="evidence" value="ECO:0007669"/>
    <property type="project" value="InterPro"/>
</dbReference>
<dbReference type="GO" id="GO:0006412">
    <property type="term" value="P:translation"/>
    <property type="evidence" value="ECO:0007669"/>
    <property type="project" value="UniProtKB-UniRule"/>
</dbReference>
<dbReference type="HAMAP" id="MF_01363">
    <property type="entry name" value="Ribosomal_bL21"/>
    <property type="match status" value="1"/>
</dbReference>
<dbReference type="InterPro" id="IPR028909">
    <property type="entry name" value="bL21-like"/>
</dbReference>
<dbReference type="InterPro" id="IPR036164">
    <property type="entry name" value="bL21-like_sf"/>
</dbReference>
<dbReference type="InterPro" id="IPR001787">
    <property type="entry name" value="Ribosomal_bL21"/>
</dbReference>
<dbReference type="InterPro" id="IPR018258">
    <property type="entry name" value="Ribosomal_bL21_CS"/>
</dbReference>
<dbReference type="NCBIfam" id="TIGR00061">
    <property type="entry name" value="L21"/>
    <property type="match status" value="1"/>
</dbReference>
<dbReference type="PANTHER" id="PTHR21349">
    <property type="entry name" value="50S RIBOSOMAL PROTEIN L21"/>
    <property type="match status" value="1"/>
</dbReference>
<dbReference type="PANTHER" id="PTHR21349:SF0">
    <property type="entry name" value="LARGE RIBOSOMAL SUBUNIT PROTEIN BL21M"/>
    <property type="match status" value="1"/>
</dbReference>
<dbReference type="Pfam" id="PF00829">
    <property type="entry name" value="Ribosomal_L21p"/>
    <property type="match status" value="1"/>
</dbReference>
<dbReference type="SUPFAM" id="SSF141091">
    <property type="entry name" value="L21p-like"/>
    <property type="match status" value="1"/>
</dbReference>
<dbReference type="PROSITE" id="PS01169">
    <property type="entry name" value="RIBOSOMAL_L21"/>
    <property type="match status" value="1"/>
</dbReference>
<comment type="function">
    <text evidence="1">This protein binds to 23S rRNA in the presence of protein L20.</text>
</comment>
<comment type="subunit">
    <text evidence="1">Part of the 50S ribosomal subunit. Contacts protein L20.</text>
</comment>
<comment type="similarity">
    <text evidence="1">Belongs to the bacterial ribosomal protein bL21 family.</text>
</comment>
<feature type="chain" id="PRO_0000269379" description="Large ribosomal subunit protein bL21">
    <location>
        <begin position="1"/>
        <end position="103"/>
    </location>
</feature>
<evidence type="ECO:0000255" key="1">
    <source>
        <dbReference type="HAMAP-Rule" id="MF_01363"/>
    </source>
</evidence>
<evidence type="ECO:0000305" key="2"/>
<name>RL21_SHIBS</name>
<accession>Q31W63</accession>
<sequence length="103" mass="11564">MYAVFQSGGKQHRVSEGQTVRLEKLDIATGETVEFAEVLMIANGEEVKIGVPFVDGGVIKAEVVAHGRGEKVKIVKFRRRKHYRKQQGHRQWFTDVKITGISA</sequence>
<reference key="1">
    <citation type="journal article" date="2005" name="Nucleic Acids Res.">
        <title>Genome dynamics and diversity of Shigella species, the etiologic agents of bacillary dysentery.</title>
        <authorList>
            <person name="Yang F."/>
            <person name="Yang J."/>
            <person name="Zhang X."/>
            <person name="Chen L."/>
            <person name="Jiang Y."/>
            <person name="Yan Y."/>
            <person name="Tang X."/>
            <person name="Wang J."/>
            <person name="Xiong Z."/>
            <person name="Dong J."/>
            <person name="Xue Y."/>
            <person name="Zhu Y."/>
            <person name="Xu X."/>
            <person name="Sun L."/>
            <person name="Chen S."/>
            <person name="Nie H."/>
            <person name="Peng J."/>
            <person name="Xu J."/>
            <person name="Wang Y."/>
            <person name="Yuan Z."/>
            <person name="Wen Y."/>
            <person name="Yao Z."/>
            <person name="Shen Y."/>
            <person name="Qiang B."/>
            <person name="Hou Y."/>
            <person name="Yu J."/>
            <person name="Jin Q."/>
        </authorList>
    </citation>
    <scope>NUCLEOTIDE SEQUENCE [LARGE SCALE GENOMIC DNA]</scope>
    <source>
        <strain>Sb227</strain>
    </source>
</reference>
<gene>
    <name evidence="1" type="primary">rplU</name>
    <name type="ordered locus">SBO_3196</name>
</gene>